<dbReference type="EC" id="4.2.1.11" evidence="1"/>
<dbReference type="EMBL" id="AL939132">
    <property type="protein sequence ID" value="CAC16971.1"/>
    <property type="molecule type" value="Genomic_DNA"/>
</dbReference>
<dbReference type="RefSeq" id="NP_631678.1">
    <property type="nucleotide sequence ID" value="NC_003888.3"/>
</dbReference>
<dbReference type="SMR" id="Q9F3P9"/>
<dbReference type="STRING" id="100226.gene:17765298"/>
<dbReference type="PaxDb" id="100226-SCO7638"/>
<dbReference type="KEGG" id="sco:SCO7638"/>
<dbReference type="PATRIC" id="fig|100226.15.peg.7758"/>
<dbReference type="eggNOG" id="COG0148">
    <property type="taxonomic scope" value="Bacteria"/>
</dbReference>
<dbReference type="HOGENOM" id="CLU_031223_2_1_11"/>
<dbReference type="InParanoid" id="Q9F3P9"/>
<dbReference type="OrthoDB" id="9804716at2"/>
<dbReference type="PhylomeDB" id="Q9F3P9"/>
<dbReference type="UniPathway" id="UPA00109">
    <property type="reaction ID" value="UER00187"/>
</dbReference>
<dbReference type="Proteomes" id="UP000001973">
    <property type="component" value="Chromosome"/>
</dbReference>
<dbReference type="GO" id="GO:0009986">
    <property type="term" value="C:cell surface"/>
    <property type="evidence" value="ECO:0007669"/>
    <property type="project" value="UniProtKB-SubCell"/>
</dbReference>
<dbReference type="GO" id="GO:0005576">
    <property type="term" value="C:extracellular region"/>
    <property type="evidence" value="ECO:0007669"/>
    <property type="project" value="UniProtKB-SubCell"/>
</dbReference>
<dbReference type="GO" id="GO:0000015">
    <property type="term" value="C:phosphopyruvate hydratase complex"/>
    <property type="evidence" value="ECO:0000318"/>
    <property type="project" value="GO_Central"/>
</dbReference>
<dbReference type="GO" id="GO:0000287">
    <property type="term" value="F:magnesium ion binding"/>
    <property type="evidence" value="ECO:0007669"/>
    <property type="project" value="UniProtKB-UniRule"/>
</dbReference>
<dbReference type="GO" id="GO:0004634">
    <property type="term" value="F:phosphopyruvate hydratase activity"/>
    <property type="evidence" value="ECO:0000318"/>
    <property type="project" value="GO_Central"/>
</dbReference>
<dbReference type="GO" id="GO:0006096">
    <property type="term" value="P:glycolytic process"/>
    <property type="evidence" value="ECO:0000318"/>
    <property type="project" value="GO_Central"/>
</dbReference>
<dbReference type="CDD" id="cd03313">
    <property type="entry name" value="enolase"/>
    <property type="match status" value="1"/>
</dbReference>
<dbReference type="FunFam" id="3.30.390.10:FF:000001">
    <property type="entry name" value="Enolase"/>
    <property type="match status" value="1"/>
</dbReference>
<dbReference type="Gene3D" id="3.20.20.120">
    <property type="entry name" value="Enolase-like C-terminal domain"/>
    <property type="match status" value="1"/>
</dbReference>
<dbReference type="Gene3D" id="3.30.390.10">
    <property type="entry name" value="Enolase-like, N-terminal domain"/>
    <property type="match status" value="1"/>
</dbReference>
<dbReference type="HAMAP" id="MF_00318">
    <property type="entry name" value="Enolase"/>
    <property type="match status" value="1"/>
</dbReference>
<dbReference type="InterPro" id="IPR000941">
    <property type="entry name" value="Enolase"/>
</dbReference>
<dbReference type="InterPro" id="IPR036849">
    <property type="entry name" value="Enolase-like_C_sf"/>
</dbReference>
<dbReference type="InterPro" id="IPR029017">
    <property type="entry name" value="Enolase-like_N"/>
</dbReference>
<dbReference type="InterPro" id="IPR020810">
    <property type="entry name" value="Enolase_C"/>
</dbReference>
<dbReference type="InterPro" id="IPR020809">
    <property type="entry name" value="Enolase_CS"/>
</dbReference>
<dbReference type="InterPro" id="IPR020811">
    <property type="entry name" value="Enolase_N"/>
</dbReference>
<dbReference type="NCBIfam" id="TIGR01060">
    <property type="entry name" value="eno"/>
    <property type="match status" value="1"/>
</dbReference>
<dbReference type="PANTHER" id="PTHR11902">
    <property type="entry name" value="ENOLASE"/>
    <property type="match status" value="1"/>
</dbReference>
<dbReference type="PANTHER" id="PTHR11902:SF1">
    <property type="entry name" value="ENOLASE"/>
    <property type="match status" value="1"/>
</dbReference>
<dbReference type="Pfam" id="PF00113">
    <property type="entry name" value="Enolase_C"/>
    <property type="match status" value="1"/>
</dbReference>
<dbReference type="Pfam" id="PF03952">
    <property type="entry name" value="Enolase_N"/>
    <property type="match status" value="1"/>
</dbReference>
<dbReference type="PIRSF" id="PIRSF001400">
    <property type="entry name" value="Enolase"/>
    <property type="match status" value="1"/>
</dbReference>
<dbReference type="PRINTS" id="PR00148">
    <property type="entry name" value="ENOLASE"/>
</dbReference>
<dbReference type="SFLD" id="SFLDS00001">
    <property type="entry name" value="Enolase"/>
    <property type="match status" value="1"/>
</dbReference>
<dbReference type="SFLD" id="SFLDF00002">
    <property type="entry name" value="enolase"/>
    <property type="match status" value="1"/>
</dbReference>
<dbReference type="SMART" id="SM01192">
    <property type="entry name" value="Enolase_C"/>
    <property type="match status" value="1"/>
</dbReference>
<dbReference type="SMART" id="SM01193">
    <property type="entry name" value="Enolase_N"/>
    <property type="match status" value="1"/>
</dbReference>
<dbReference type="SUPFAM" id="SSF51604">
    <property type="entry name" value="Enolase C-terminal domain-like"/>
    <property type="match status" value="1"/>
</dbReference>
<dbReference type="SUPFAM" id="SSF54826">
    <property type="entry name" value="Enolase N-terminal domain-like"/>
    <property type="match status" value="1"/>
</dbReference>
<dbReference type="PROSITE" id="PS00164">
    <property type="entry name" value="ENOLASE"/>
    <property type="match status" value="1"/>
</dbReference>
<organism>
    <name type="scientific">Streptomyces coelicolor (strain ATCC BAA-471 / A3(2) / M145)</name>
    <dbReference type="NCBI Taxonomy" id="100226"/>
    <lineage>
        <taxon>Bacteria</taxon>
        <taxon>Bacillati</taxon>
        <taxon>Actinomycetota</taxon>
        <taxon>Actinomycetes</taxon>
        <taxon>Kitasatosporales</taxon>
        <taxon>Streptomycetaceae</taxon>
        <taxon>Streptomyces</taxon>
        <taxon>Streptomyces albidoflavus group</taxon>
    </lineage>
</organism>
<evidence type="ECO:0000255" key="1">
    <source>
        <dbReference type="HAMAP-Rule" id="MF_00318"/>
    </source>
</evidence>
<comment type="function">
    <text evidence="1">Catalyzes the reversible conversion of 2-phosphoglycerate (2-PG) into phosphoenolpyruvate (PEP). It is essential for the degradation of carbohydrates via glycolysis.</text>
</comment>
<comment type="catalytic activity">
    <reaction evidence="1">
        <text>(2R)-2-phosphoglycerate = phosphoenolpyruvate + H2O</text>
        <dbReference type="Rhea" id="RHEA:10164"/>
        <dbReference type="ChEBI" id="CHEBI:15377"/>
        <dbReference type="ChEBI" id="CHEBI:58289"/>
        <dbReference type="ChEBI" id="CHEBI:58702"/>
        <dbReference type="EC" id="4.2.1.11"/>
    </reaction>
</comment>
<comment type="cofactor">
    <cofactor evidence="1">
        <name>Mg(2+)</name>
        <dbReference type="ChEBI" id="CHEBI:18420"/>
    </cofactor>
    <text evidence="1">Binds a second Mg(2+) ion via substrate during catalysis.</text>
</comment>
<comment type="pathway">
    <text evidence="1">Carbohydrate degradation; glycolysis; pyruvate from D-glyceraldehyde 3-phosphate: step 4/5.</text>
</comment>
<comment type="subcellular location">
    <subcellularLocation>
        <location evidence="1">Cytoplasm</location>
    </subcellularLocation>
    <subcellularLocation>
        <location evidence="1">Secreted</location>
    </subcellularLocation>
    <subcellularLocation>
        <location evidence="1">Cell surface</location>
    </subcellularLocation>
    <text evidence="1">Fractions of enolase are present in both the cytoplasm and on the cell surface.</text>
</comment>
<comment type="similarity">
    <text evidence="1">Belongs to the enolase family.</text>
</comment>
<keyword id="KW-0963">Cytoplasm</keyword>
<keyword id="KW-0324">Glycolysis</keyword>
<keyword id="KW-0456">Lyase</keyword>
<keyword id="KW-0460">Magnesium</keyword>
<keyword id="KW-0479">Metal-binding</keyword>
<keyword id="KW-1185">Reference proteome</keyword>
<keyword id="KW-0964">Secreted</keyword>
<gene>
    <name evidence="1" type="primary">eno2</name>
    <name type="ordered locus">SCO7638</name>
    <name type="ORF">SC10F4.11c</name>
</gene>
<name>ENO2_STRCO</name>
<sequence>MSATAVEPAAAIETVTARRIIDSRGNPTVEVDVVLEDGSLGRAAVPSGASTGAREAVELRDEDPTRWHGKGVDRAVAHVNGEIAASVRGRDAADQAGLDAALIALDGTAAKSRLGANALLGVSLAAAKAAAAARRQPLYRYLGGADAHLLPLPMMNIVNGGAHADNPLDFQEFMIVPVGADTFAEAVRMGSEVFHTLRRDLLAAGHSTGVGDEGGFAPALRTAEEALDFVVAAIERTGYRAGPDIGLVMDPASSEFFRDGGYDYAGEGVRRSPAEHADHLAGLIDAYPVVSIEDPMAEDDLDGWRELTDRVGDRCQLTGDDVFCTDEALVREGIRTGVGNSVLVKVNQIGTLTEALATVATAHEAGWTVVMSHRSGETEDTTIADLAVATGCGQIKTGSLSRSDRTAKYNRLIRIEEELGASARFAGRSALRRV</sequence>
<feature type="chain" id="PRO_0000133977" description="Enolase 2">
    <location>
        <begin position="1"/>
        <end position="434"/>
    </location>
</feature>
<feature type="active site" description="Proton donor" evidence="1">
    <location>
        <position position="213"/>
    </location>
</feature>
<feature type="active site" description="Proton acceptor" evidence="1">
    <location>
        <position position="345"/>
    </location>
</feature>
<feature type="binding site" evidence="1">
    <location>
        <position position="171"/>
    </location>
    <ligand>
        <name>(2R)-2-phosphoglycerate</name>
        <dbReference type="ChEBI" id="CHEBI:58289"/>
    </ligand>
</feature>
<feature type="binding site" evidence="1">
    <location>
        <position position="250"/>
    </location>
    <ligand>
        <name>Mg(2+)</name>
        <dbReference type="ChEBI" id="CHEBI:18420"/>
    </ligand>
</feature>
<feature type="binding site" evidence="1">
    <location>
        <position position="293"/>
    </location>
    <ligand>
        <name>Mg(2+)</name>
        <dbReference type="ChEBI" id="CHEBI:18420"/>
    </ligand>
</feature>
<feature type="binding site" evidence="1">
    <location>
        <position position="320"/>
    </location>
    <ligand>
        <name>Mg(2+)</name>
        <dbReference type="ChEBI" id="CHEBI:18420"/>
    </ligand>
</feature>
<feature type="binding site" evidence="1">
    <location>
        <position position="345"/>
    </location>
    <ligand>
        <name>(2R)-2-phosphoglycerate</name>
        <dbReference type="ChEBI" id="CHEBI:58289"/>
    </ligand>
</feature>
<feature type="binding site" evidence="1">
    <location>
        <position position="374"/>
    </location>
    <ligand>
        <name>(2R)-2-phosphoglycerate</name>
        <dbReference type="ChEBI" id="CHEBI:58289"/>
    </ligand>
</feature>
<feature type="binding site" evidence="1">
    <location>
        <position position="375"/>
    </location>
    <ligand>
        <name>(2R)-2-phosphoglycerate</name>
        <dbReference type="ChEBI" id="CHEBI:58289"/>
    </ligand>
</feature>
<feature type="binding site" evidence="1">
    <location>
        <position position="396"/>
    </location>
    <ligand>
        <name>(2R)-2-phosphoglycerate</name>
        <dbReference type="ChEBI" id="CHEBI:58289"/>
    </ligand>
</feature>
<protein>
    <recommendedName>
        <fullName evidence="1">Enolase 2</fullName>
        <ecNumber evidence="1">4.2.1.11</ecNumber>
    </recommendedName>
    <alternativeName>
        <fullName evidence="1">2-phospho-D-glycerate hydro-lyase 2</fullName>
    </alternativeName>
    <alternativeName>
        <fullName evidence="1">2-phosphoglycerate dehydratase 2</fullName>
    </alternativeName>
</protein>
<accession>Q9F3P9</accession>
<proteinExistence type="inferred from homology"/>
<reference key="1">
    <citation type="journal article" date="2002" name="Nature">
        <title>Complete genome sequence of the model actinomycete Streptomyces coelicolor A3(2).</title>
        <authorList>
            <person name="Bentley S.D."/>
            <person name="Chater K.F."/>
            <person name="Cerdeno-Tarraga A.-M."/>
            <person name="Challis G.L."/>
            <person name="Thomson N.R."/>
            <person name="James K.D."/>
            <person name="Harris D.E."/>
            <person name="Quail M.A."/>
            <person name="Kieser H."/>
            <person name="Harper D."/>
            <person name="Bateman A."/>
            <person name="Brown S."/>
            <person name="Chandra G."/>
            <person name="Chen C.W."/>
            <person name="Collins M."/>
            <person name="Cronin A."/>
            <person name="Fraser A."/>
            <person name="Goble A."/>
            <person name="Hidalgo J."/>
            <person name="Hornsby T."/>
            <person name="Howarth S."/>
            <person name="Huang C.-H."/>
            <person name="Kieser T."/>
            <person name="Larke L."/>
            <person name="Murphy L.D."/>
            <person name="Oliver K."/>
            <person name="O'Neil S."/>
            <person name="Rabbinowitsch E."/>
            <person name="Rajandream M.A."/>
            <person name="Rutherford K.M."/>
            <person name="Rutter S."/>
            <person name="Seeger K."/>
            <person name="Saunders D."/>
            <person name="Sharp S."/>
            <person name="Squares R."/>
            <person name="Squares S."/>
            <person name="Taylor K."/>
            <person name="Warren T."/>
            <person name="Wietzorrek A."/>
            <person name="Woodward J.R."/>
            <person name="Barrell B.G."/>
            <person name="Parkhill J."/>
            <person name="Hopwood D.A."/>
        </authorList>
    </citation>
    <scope>NUCLEOTIDE SEQUENCE [LARGE SCALE GENOMIC DNA]</scope>
    <source>
        <strain>ATCC BAA-471 / A3(2) / M145</strain>
    </source>
</reference>